<keyword id="KW-0067">ATP-binding</keyword>
<keyword id="KW-0131">Cell cycle</keyword>
<keyword id="KW-1003">Cell membrane</keyword>
<keyword id="KW-0418">Kinase</keyword>
<keyword id="KW-0472">Membrane</keyword>
<keyword id="KW-0547">Nucleotide-binding</keyword>
<keyword id="KW-0597">Phosphoprotein</keyword>
<keyword id="KW-1185">Reference proteome</keyword>
<keyword id="KW-0723">Serine/threonine-protein kinase</keyword>
<keyword id="KW-0808">Transferase</keyword>
<evidence type="ECO:0000250" key="1"/>
<evidence type="ECO:0000250" key="2">
    <source>
        <dbReference type="UniProtKB" id="O94804"/>
    </source>
</evidence>
<evidence type="ECO:0000255" key="3">
    <source>
        <dbReference type="PROSITE-ProRule" id="PRU00159"/>
    </source>
</evidence>
<evidence type="ECO:0000255" key="4">
    <source>
        <dbReference type="PROSITE-ProRule" id="PRU10027"/>
    </source>
</evidence>
<evidence type="ECO:0000256" key="5">
    <source>
        <dbReference type="SAM" id="MobiDB-lite"/>
    </source>
</evidence>
<evidence type="ECO:0000305" key="6"/>
<evidence type="ECO:0007744" key="7">
    <source>
    </source>
</evidence>
<feature type="chain" id="PRO_0000414711" description="Serine/threonine-protein kinase 10">
    <location>
        <begin position="1"/>
        <end position="967"/>
    </location>
</feature>
<feature type="domain" description="Protein kinase" evidence="3">
    <location>
        <begin position="36"/>
        <end position="294"/>
    </location>
</feature>
<feature type="region of interest" description="Activation segment" evidence="1">
    <location>
        <begin position="175"/>
        <end position="224"/>
    </location>
</feature>
<feature type="region of interest" description="Disordered" evidence="5">
    <location>
        <begin position="317"/>
        <end position="454"/>
    </location>
</feature>
<feature type="region of interest" description="Disordered" evidence="5">
    <location>
        <begin position="468"/>
        <end position="498"/>
    </location>
</feature>
<feature type="region of interest" description="Disordered" evidence="5">
    <location>
        <begin position="827"/>
        <end position="866"/>
    </location>
</feature>
<feature type="region of interest" description="Disordered" evidence="5">
    <location>
        <begin position="902"/>
        <end position="967"/>
    </location>
</feature>
<feature type="compositionally biased region" description="Polar residues" evidence="5">
    <location>
        <begin position="339"/>
        <end position="364"/>
    </location>
</feature>
<feature type="compositionally biased region" description="Polar residues" evidence="5">
    <location>
        <begin position="378"/>
        <end position="393"/>
    </location>
</feature>
<feature type="compositionally biased region" description="Polar residues" evidence="5">
    <location>
        <begin position="431"/>
        <end position="454"/>
    </location>
</feature>
<feature type="compositionally biased region" description="Polar residues" evidence="5">
    <location>
        <begin position="486"/>
        <end position="498"/>
    </location>
</feature>
<feature type="compositionally biased region" description="Basic and acidic residues" evidence="5">
    <location>
        <begin position="835"/>
        <end position="866"/>
    </location>
</feature>
<feature type="compositionally biased region" description="Basic and acidic residues" evidence="5">
    <location>
        <begin position="902"/>
        <end position="947"/>
    </location>
</feature>
<feature type="active site" description="Proton acceptor" evidence="3 4">
    <location>
        <position position="157"/>
    </location>
</feature>
<feature type="binding site" evidence="3">
    <location>
        <begin position="42"/>
        <end position="50"/>
    </location>
    <ligand>
        <name>ATP</name>
        <dbReference type="ChEBI" id="CHEBI:30616"/>
    </ligand>
</feature>
<feature type="binding site" evidence="3">
    <location>
        <position position="65"/>
    </location>
    <ligand>
        <name>ATP</name>
        <dbReference type="ChEBI" id="CHEBI:30616"/>
    </ligand>
</feature>
<feature type="modified residue" description="Phosphoserine" evidence="2">
    <location>
        <position position="13"/>
    </location>
</feature>
<feature type="modified residue" description="Phosphoserine" evidence="7">
    <location>
        <position position="20"/>
    </location>
</feature>
<feature type="modified residue" description="Phosphothreonine; by autocatalysis" evidence="1">
    <location>
        <position position="185"/>
    </location>
</feature>
<feature type="modified residue" description="Phosphoserine; by autocatalysis" evidence="2">
    <location>
        <position position="191"/>
    </location>
</feature>
<feature type="modified residue" description="Phosphoserine" evidence="2">
    <location>
        <position position="438"/>
    </location>
</feature>
<feature type="modified residue" description="Phosphoserine" evidence="2">
    <location>
        <position position="450"/>
    </location>
</feature>
<feature type="modified residue" description="Phosphoserine" evidence="2">
    <location>
        <position position="454"/>
    </location>
</feature>
<feature type="modified residue" description="Phosphoserine" evidence="2">
    <location>
        <position position="485"/>
    </location>
</feature>
<feature type="modified residue" description="Phosphoserine" evidence="7">
    <location>
        <position position="514"/>
    </location>
</feature>
<feature type="modified residue" description="Phosphoserine" evidence="2">
    <location>
        <position position="549"/>
    </location>
</feature>
<feature type="modified residue" description="Phosphothreonine" evidence="2">
    <location>
        <position position="951"/>
    </location>
</feature>
<name>STK10_RAT</name>
<sequence>MAFANFRRILRLSTFEKRKSREYEHVRRDLDPNDVWEILGELGDGAFGKVYKAKNKETGALAAAKVIETKSEEELEDYIVEIEILATCDHPYIVKLLGAYYYDGKLWIMIEFCPGGAVDAIMLELDRGLTEPQIQVVCRQMLEALNFLHGKRIIHRDLKAGNVLMTLEGDIRLADFGVSAKNLKTLQKRDSFIGTPYWMAPEVVLCETMKDAPYDYKADIWSLGITLIEMAQIEPPHHELNPMRVLLKIAKSDPPTLLTPSKWSTEFRDFLKIALDKNPETRPSAAQLLQHPFVSTVTSNKALRELVAEAKAEVMEEIEDGKEDGSEKDAVSAVPPPVNHTQDSSANGTQPSLNSDKLLQDSSTPLPPSQPQEPVNGPCNQPSGDGSPQNTSPADEVSKNDNGLKVPVPLRKSRPLSVDARIQVTEEKQITDQAENPSSAASKPPKVNQSRPNSSALETLGVETLANGGLELPGSVTPNHSKRASDCSNLSTSESMDYGTSLSADLSLNKETGSLSLKGSKLHNKTLKRTRRFVVDGVEVSITTSKIISEDEKKDEEMRFLRRQELRELRLLQKEEHRNQTQLSTKHELQLEQMHRRFEQEINAKKKFYDVELENLERQQKQQVEKMEQDHSVRRREEAKRIRLEQDRDYARFQEQLKQMKKEVKRSIEKALRKQRQESMRMGQDSHTQKKQRLDRDFVAKQKEDLELAMKKLTAENRREICDKERDCLNKKQELLRDREAALWEMEEHQLQERHQLVKQQLKDQYFLQRHDLLRKHEKEREQMQRYNQRMMEQLKVRQQQEKARLPKIQRSDGKTRMAMYKKSLHINGAGSASEQREKVKQFSQQEEKRQKAERLQQQQKHENQMRDMVAQCESNMNELQQLQNEKCHLLVEHETQKLKALDESHNQSLKEWRDKLRPRKKALEEDLNQKKREQEMFFRLSEEAETRPTTPNRASKFFPYSSGDAS</sequence>
<accession>E9PTG8</accession>
<accession>D3ZUC0</accession>
<reference key="1">
    <citation type="journal article" date="2004" name="Nature">
        <title>Genome sequence of the Brown Norway rat yields insights into mammalian evolution.</title>
        <authorList>
            <person name="Gibbs R.A."/>
            <person name="Weinstock G.M."/>
            <person name="Metzker M.L."/>
            <person name="Muzny D.M."/>
            <person name="Sodergren E.J."/>
            <person name="Scherer S."/>
            <person name="Scott G."/>
            <person name="Steffen D."/>
            <person name="Worley K.C."/>
            <person name="Burch P.E."/>
            <person name="Okwuonu G."/>
            <person name="Hines S."/>
            <person name="Lewis L."/>
            <person name="Deramo C."/>
            <person name="Delgado O."/>
            <person name="Dugan-Rocha S."/>
            <person name="Miner G."/>
            <person name="Morgan M."/>
            <person name="Hawes A."/>
            <person name="Gill R."/>
            <person name="Holt R.A."/>
            <person name="Adams M.D."/>
            <person name="Amanatides P.G."/>
            <person name="Baden-Tillson H."/>
            <person name="Barnstead M."/>
            <person name="Chin S."/>
            <person name="Evans C.A."/>
            <person name="Ferriera S."/>
            <person name="Fosler C."/>
            <person name="Glodek A."/>
            <person name="Gu Z."/>
            <person name="Jennings D."/>
            <person name="Kraft C.L."/>
            <person name="Nguyen T."/>
            <person name="Pfannkoch C.M."/>
            <person name="Sitter C."/>
            <person name="Sutton G.G."/>
            <person name="Venter J.C."/>
            <person name="Woodage T."/>
            <person name="Smith D."/>
            <person name="Lee H.-M."/>
            <person name="Gustafson E."/>
            <person name="Cahill P."/>
            <person name="Kana A."/>
            <person name="Doucette-Stamm L."/>
            <person name="Weinstock K."/>
            <person name="Fechtel K."/>
            <person name="Weiss R.B."/>
            <person name="Dunn D.M."/>
            <person name="Green E.D."/>
            <person name="Blakesley R.W."/>
            <person name="Bouffard G.G."/>
            <person name="De Jong P.J."/>
            <person name="Osoegawa K."/>
            <person name="Zhu B."/>
            <person name="Marra M."/>
            <person name="Schein J."/>
            <person name="Bosdet I."/>
            <person name="Fjell C."/>
            <person name="Jones S."/>
            <person name="Krzywinski M."/>
            <person name="Mathewson C."/>
            <person name="Siddiqui A."/>
            <person name="Wye N."/>
            <person name="McPherson J."/>
            <person name="Zhao S."/>
            <person name="Fraser C.M."/>
            <person name="Shetty J."/>
            <person name="Shatsman S."/>
            <person name="Geer K."/>
            <person name="Chen Y."/>
            <person name="Abramzon S."/>
            <person name="Nierman W.C."/>
            <person name="Havlak P.H."/>
            <person name="Chen R."/>
            <person name="Durbin K.J."/>
            <person name="Egan A."/>
            <person name="Ren Y."/>
            <person name="Song X.-Z."/>
            <person name="Li B."/>
            <person name="Liu Y."/>
            <person name="Qin X."/>
            <person name="Cawley S."/>
            <person name="Cooney A.J."/>
            <person name="D'Souza L.M."/>
            <person name="Martin K."/>
            <person name="Wu J.Q."/>
            <person name="Gonzalez-Garay M.L."/>
            <person name="Jackson A.R."/>
            <person name="Kalafus K.J."/>
            <person name="McLeod M.P."/>
            <person name="Milosavljevic A."/>
            <person name="Virk D."/>
            <person name="Volkov A."/>
            <person name="Wheeler D.A."/>
            <person name="Zhang Z."/>
            <person name="Bailey J.A."/>
            <person name="Eichler E.E."/>
            <person name="Tuzun E."/>
            <person name="Birney E."/>
            <person name="Mongin E."/>
            <person name="Ureta-Vidal A."/>
            <person name="Woodwark C."/>
            <person name="Zdobnov E."/>
            <person name="Bork P."/>
            <person name="Suyama M."/>
            <person name="Torrents D."/>
            <person name="Alexandersson M."/>
            <person name="Trask B.J."/>
            <person name="Young J.M."/>
            <person name="Huang H."/>
            <person name="Wang H."/>
            <person name="Xing H."/>
            <person name="Daniels S."/>
            <person name="Gietzen D."/>
            <person name="Schmidt J."/>
            <person name="Stevens K."/>
            <person name="Vitt U."/>
            <person name="Wingrove J."/>
            <person name="Camara F."/>
            <person name="Mar Alba M."/>
            <person name="Abril J.F."/>
            <person name="Guigo R."/>
            <person name="Smit A."/>
            <person name="Dubchak I."/>
            <person name="Rubin E.M."/>
            <person name="Couronne O."/>
            <person name="Poliakov A."/>
            <person name="Huebner N."/>
            <person name="Ganten D."/>
            <person name="Goesele C."/>
            <person name="Hummel O."/>
            <person name="Kreitler T."/>
            <person name="Lee Y.-A."/>
            <person name="Monti J."/>
            <person name="Schulz H."/>
            <person name="Zimdahl H."/>
            <person name="Himmelbauer H."/>
            <person name="Lehrach H."/>
            <person name="Jacob H.J."/>
            <person name="Bromberg S."/>
            <person name="Gullings-Handley J."/>
            <person name="Jensen-Seaman M.I."/>
            <person name="Kwitek A.E."/>
            <person name="Lazar J."/>
            <person name="Pasko D."/>
            <person name="Tonellato P.J."/>
            <person name="Twigger S."/>
            <person name="Ponting C.P."/>
            <person name="Duarte J.M."/>
            <person name="Rice S."/>
            <person name="Goodstadt L."/>
            <person name="Beatson S.A."/>
            <person name="Emes R.D."/>
            <person name="Winter E.E."/>
            <person name="Webber C."/>
            <person name="Brandt P."/>
            <person name="Nyakatura G."/>
            <person name="Adetobi M."/>
            <person name="Chiaromonte F."/>
            <person name="Elnitski L."/>
            <person name="Eswara P."/>
            <person name="Hardison R.C."/>
            <person name="Hou M."/>
            <person name="Kolbe D."/>
            <person name="Makova K."/>
            <person name="Miller W."/>
            <person name="Nekrutenko A."/>
            <person name="Riemer C."/>
            <person name="Schwartz S."/>
            <person name="Taylor J."/>
            <person name="Yang S."/>
            <person name="Zhang Y."/>
            <person name="Lindpaintner K."/>
            <person name="Andrews T.D."/>
            <person name="Caccamo M."/>
            <person name="Clamp M."/>
            <person name="Clarke L."/>
            <person name="Curwen V."/>
            <person name="Durbin R.M."/>
            <person name="Eyras E."/>
            <person name="Searle S.M."/>
            <person name="Cooper G.M."/>
            <person name="Batzoglou S."/>
            <person name="Brudno M."/>
            <person name="Sidow A."/>
            <person name="Stone E.A."/>
            <person name="Payseur B.A."/>
            <person name="Bourque G."/>
            <person name="Lopez-Otin C."/>
            <person name="Puente X.S."/>
            <person name="Chakrabarti K."/>
            <person name="Chatterji S."/>
            <person name="Dewey C."/>
            <person name="Pachter L."/>
            <person name="Bray N."/>
            <person name="Yap V.B."/>
            <person name="Caspi A."/>
            <person name="Tesler G."/>
            <person name="Pevzner P.A."/>
            <person name="Haussler D."/>
            <person name="Roskin K.M."/>
            <person name="Baertsch R."/>
            <person name="Clawson H."/>
            <person name="Furey T.S."/>
            <person name="Hinrichs A.S."/>
            <person name="Karolchik D."/>
            <person name="Kent W.J."/>
            <person name="Rosenbloom K.R."/>
            <person name="Trumbower H."/>
            <person name="Weirauch M."/>
            <person name="Cooper D.N."/>
            <person name="Stenson P.D."/>
            <person name="Ma B."/>
            <person name="Brent M."/>
            <person name="Arumugam M."/>
            <person name="Shteynberg D."/>
            <person name="Copley R.R."/>
            <person name="Taylor M.S."/>
            <person name="Riethman H."/>
            <person name="Mudunuri U."/>
            <person name="Peterson J."/>
            <person name="Guyer M."/>
            <person name="Felsenfeld A."/>
            <person name="Old S."/>
            <person name="Mockrin S."/>
            <person name="Collins F.S."/>
        </authorList>
    </citation>
    <scope>NUCLEOTIDE SEQUENCE [LARGE SCALE GENOMIC DNA]</scope>
    <source>
        <strain>Brown Norway</strain>
    </source>
</reference>
<reference key="2">
    <citation type="journal article" date="2012" name="Nat. Commun.">
        <title>Quantitative maps of protein phosphorylation sites across 14 different rat organs and tissues.</title>
        <authorList>
            <person name="Lundby A."/>
            <person name="Secher A."/>
            <person name="Lage K."/>
            <person name="Nordsborg N.B."/>
            <person name="Dmytriyev A."/>
            <person name="Lundby C."/>
            <person name="Olsen J.V."/>
        </authorList>
    </citation>
    <scope>PHOSPHORYLATION [LARGE SCALE ANALYSIS] AT SER-20 AND SER-514</scope>
    <scope>IDENTIFICATION BY MASS SPECTROMETRY [LARGE SCALE ANALYSIS]</scope>
</reference>
<gene>
    <name type="primary">Stk10</name>
</gene>
<protein>
    <recommendedName>
        <fullName>Serine/threonine-protein kinase 10</fullName>
        <ecNumber>2.7.11.1</ecNumber>
    </recommendedName>
</protein>
<organism>
    <name type="scientific">Rattus norvegicus</name>
    <name type="common">Rat</name>
    <dbReference type="NCBI Taxonomy" id="10116"/>
    <lineage>
        <taxon>Eukaryota</taxon>
        <taxon>Metazoa</taxon>
        <taxon>Chordata</taxon>
        <taxon>Craniata</taxon>
        <taxon>Vertebrata</taxon>
        <taxon>Euteleostomi</taxon>
        <taxon>Mammalia</taxon>
        <taxon>Eutheria</taxon>
        <taxon>Euarchontoglires</taxon>
        <taxon>Glires</taxon>
        <taxon>Rodentia</taxon>
        <taxon>Myomorpha</taxon>
        <taxon>Muroidea</taxon>
        <taxon>Muridae</taxon>
        <taxon>Murinae</taxon>
        <taxon>Rattus</taxon>
    </lineage>
</organism>
<dbReference type="EC" id="2.7.11.1"/>
<dbReference type="SMR" id="E9PTG8"/>
<dbReference type="FunCoup" id="E9PTG8">
    <property type="interactions" value="2540"/>
</dbReference>
<dbReference type="STRING" id="10116.ENSRNOP00000044325"/>
<dbReference type="iPTMnet" id="E9PTG8"/>
<dbReference type="PhosphoSitePlus" id="E9PTG8"/>
<dbReference type="jPOST" id="E9PTG8"/>
<dbReference type="PaxDb" id="10116-ENSRNOP00000044325"/>
<dbReference type="PeptideAtlas" id="E9PTG8"/>
<dbReference type="UCSC" id="RGD:3779">
    <property type="organism name" value="rat"/>
</dbReference>
<dbReference type="AGR" id="RGD:3779"/>
<dbReference type="RGD" id="3779">
    <property type="gene designation" value="Stk10"/>
</dbReference>
<dbReference type="eggNOG" id="KOG0579">
    <property type="taxonomic scope" value="Eukaryota"/>
</dbReference>
<dbReference type="InParanoid" id="E9PTG8"/>
<dbReference type="Reactome" id="R-RNO-6798695">
    <property type="pathway name" value="Neutrophil degranulation"/>
</dbReference>
<dbReference type="Reactome" id="R-RNO-8980692">
    <property type="pathway name" value="RHOA GTPase cycle"/>
</dbReference>
<dbReference type="Reactome" id="R-RNO-9013026">
    <property type="pathway name" value="RHOB GTPase cycle"/>
</dbReference>
<dbReference type="PRO" id="PR:E9PTG8"/>
<dbReference type="Proteomes" id="UP000002494">
    <property type="component" value="Unplaced"/>
</dbReference>
<dbReference type="GO" id="GO:0005737">
    <property type="term" value="C:cytoplasm"/>
    <property type="evidence" value="ECO:0000318"/>
    <property type="project" value="GO_Central"/>
</dbReference>
<dbReference type="GO" id="GO:0005886">
    <property type="term" value="C:plasma membrane"/>
    <property type="evidence" value="ECO:0000250"/>
    <property type="project" value="UniProtKB"/>
</dbReference>
<dbReference type="GO" id="GO:0005524">
    <property type="term" value="F:ATP binding"/>
    <property type="evidence" value="ECO:0007669"/>
    <property type="project" value="UniProtKB-KW"/>
</dbReference>
<dbReference type="GO" id="GO:0042802">
    <property type="term" value="F:identical protein binding"/>
    <property type="evidence" value="ECO:0000266"/>
    <property type="project" value="RGD"/>
</dbReference>
<dbReference type="GO" id="GO:0042803">
    <property type="term" value="F:protein homodimerization activity"/>
    <property type="evidence" value="ECO:0000250"/>
    <property type="project" value="UniProtKB"/>
</dbReference>
<dbReference type="GO" id="GO:0106310">
    <property type="term" value="F:protein serine kinase activity"/>
    <property type="evidence" value="ECO:0007669"/>
    <property type="project" value="RHEA"/>
</dbReference>
<dbReference type="GO" id="GO:0004674">
    <property type="term" value="F:protein serine/threonine kinase activity"/>
    <property type="evidence" value="ECO:0000250"/>
    <property type="project" value="UniProtKB"/>
</dbReference>
<dbReference type="GO" id="GO:0035556">
    <property type="term" value="P:intracellular signal transduction"/>
    <property type="evidence" value="ECO:0000318"/>
    <property type="project" value="GO_Central"/>
</dbReference>
<dbReference type="GO" id="GO:0071593">
    <property type="term" value="P:lymphocyte aggregation"/>
    <property type="evidence" value="ECO:0000266"/>
    <property type="project" value="RGD"/>
</dbReference>
<dbReference type="GO" id="GO:0046777">
    <property type="term" value="P:protein autophosphorylation"/>
    <property type="evidence" value="ECO:0000250"/>
    <property type="project" value="UniProtKB"/>
</dbReference>
<dbReference type="GO" id="GO:2000401">
    <property type="term" value="P:regulation of lymphocyte migration"/>
    <property type="evidence" value="ECO:0000250"/>
    <property type="project" value="UniProtKB"/>
</dbReference>
<dbReference type="CDD" id="cd06644">
    <property type="entry name" value="STKc_STK10"/>
    <property type="match status" value="1"/>
</dbReference>
<dbReference type="FunFam" id="1.10.510.10:FF:000081">
    <property type="entry name" value="STE20-like serine/threonine-protein kinase"/>
    <property type="match status" value="1"/>
</dbReference>
<dbReference type="FunFam" id="3.30.200.20:FF:000120">
    <property type="entry name" value="STE20-like serine/threonine-protein kinase"/>
    <property type="match status" value="1"/>
</dbReference>
<dbReference type="Gene3D" id="3.30.200.20">
    <property type="entry name" value="Phosphorylase Kinase, domain 1"/>
    <property type="match status" value="1"/>
</dbReference>
<dbReference type="Gene3D" id="1.10.510.10">
    <property type="entry name" value="Transferase(Phosphotransferase) domain 1"/>
    <property type="match status" value="1"/>
</dbReference>
<dbReference type="InterPro" id="IPR011009">
    <property type="entry name" value="Kinase-like_dom_sf"/>
</dbReference>
<dbReference type="InterPro" id="IPR022165">
    <property type="entry name" value="PKK"/>
</dbReference>
<dbReference type="InterPro" id="IPR000719">
    <property type="entry name" value="Prot_kinase_dom"/>
</dbReference>
<dbReference type="InterPro" id="IPR017441">
    <property type="entry name" value="Protein_kinase_ATP_BS"/>
</dbReference>
<dbReference type="InterPro" id="IPR008271">
    <property type="entry name" value="Ser/Thr_kinase_AS"/>
</dbReference>
<dbReference type="InterPro" id="IPR051585">
    <property type="entry name" value="STE20_Ser/Thr_Kinases"/>
</dbReference>
<dbReference type="InterPro" id="IPR042743">
    <property type="entry name" value="STK10_STKc"/>
</dbReference>
<dbReference type="PANTHER" id="PTHR46538:SF2">
    <property type="entry name" value="NON-SPECIFIC SERINE_THREONINE PROTEIN KINASE"/>
    <property type="match status" value="1"/>
</dbReference>
<dbReference type="PANTHER" id="PTHR46538">
    <property type="entry name" value="PROTEIN KINASE DOMAIN-CONTAINING PROTEIN"/>
    <property type="match status" value="1"/>
</dbReference>
<dbReference type="Pfam" id="PF00069">
    <property type="entry name" value="Pkinase"/>
    <property type="match status" value="1"/>
</dbReference>
<dbReference type="Pfam" id="PF12474">
    <property type="entry name" value="PKK"/>
    <property type="match status" value="2"/>
</dbReference>
<dbReference type="SMART" id="SM00220">
    <property type="entry name" value="S_TKc"/>
    <property type="match status" value="1"/>
</dbReference>
<dbReference type="SUPFAM" id="SSF56112">
    <property type="entry name" value="Protein kinase-like (PK-like)"/>
    <property type="match status" value="1"/>
</dbReference>
<dbReference type="PROSITE" id="PS00107">
    <property type="entry name" value="PROTEIN_KINASE_ATP"/>
    <property type="match status" value="1"/>
</dbReference>
<dbReference type="PROSITE" id="PS50011">
    <property type="entry name" value="PROTEIN_KINASE_DOM"/>
    <property type="match status" value="1"/>
</dbReference>
<dbReference type="PROSITE" id="PS00108">
    <property type="entry name" value="PROTEIN_KINASE_ST"/>
    <property type="match status" value="1"/>
</dbReference>
<proteinExistence type="evidence at protein level"/>
<comment type="function">
    <text evidence="1">Serine/threonine-protein kinase involved in regulation of lymphocyte migration. Phosphorylates MSN, and possibly PLK1. Involved in regulation of lymphocyte migration by mediating phosphorylation of ERM proteins such as MSN. Acts as a negative regulator of MAP3K1/MEKK1. May also act as a cell cycle regulator by acting as a polo kinase kinase: mediates phosphorylation of PLK1 in vitro; however such data require additional evidences in vivo (By similarity).</text>
</comment>
<comment type="catalytic activity">
    <reaction>
        <text>L-seryl-[protein] + ATP = O-phospho-L-seryl-[protein] + ADP + H(+)</text>
        <dbReference type="Rhea" id="RHEA:17989"/>
        <dbReference type="Rhea" id="RHEA-COMP:9863"/>
        <dbReference type="Rhea" id="RHEA-COMP:11604"/>
        <dbReference type="ChEBI" id="CHEBI:15378"/>
        <dbReference type="ChEBI" id="CHEBI:29999"/>
        <dbReference type="ChEBI" id="CHEBI:30616"/>
        <dbReference type="ChEBI" id="CHEBI:83421"/>
        <dbReference type="ChEBI" id="CHEBI:456216"/>
        <dbReference type="EC" id="2.7.11.1"/>
    </reaction>
</comment>
<comment type="catalytic activity">
    <reaction>
        <text>L-threonyl-[protein] + ATP = O-phospho-L-threonyl-[protein] + ADP + H(+)</text>
        <dbReference type="Rhea" id="RHEA:46608"/>
        <dbReference type="Rhea" id="RHEA-COMP:11060"/>
        <dbReference type="Rhea" id="RHEA-COMP:11605"/>
        <dbReference type="ChEBI" id="CHEBI:15378"/>
        <dbReference type="ChEBI" id="CHEBI:30013"/>
        <dbReference type="ChEBI" id="CHEBI:30616"/>
        <dbReference type="ChEBI" id="CHEBI:61977"/>
        <dbReference type="ChEBI" id="CHEBI:456216"/>
        <dbReference type="EC" id="2.7.11.1"/>
    </reaction>
</comment>
<comment type="activity regulation">
    <text evidence="1">Inhibited by the pyrrole-indolinone inhibitor SU11274 (K00593): intercalates between the ATP-binding Lys-65 and alpha-C glutamate (Glu-81), resulting in a partial disordering of the lysine side chain. Also specifically inhibited by erlotinib. Slightly inhibited by gefitinib (By similarity).</text>
</comment>
<comment type="subunit">
    <text evidence="1">Homodimer; homodimerization is required for activation segment autophosphorylation.</text>
</comment>
<comment type="subcellular location">
    <subcellularLocation>
        <location evidence="1">Cell membrane</location>
        <topology evidence="1">Peripheral membrane protein</topology>
    </subcellularLocation>
</comment>
<comment type="PTM">
    <text evidence="1">Autophosphorylates following homodimerization, leading to activation of the protein.</text>
</comment>
<comment type="similarity">
    <text evidence="6">Belongs to the protein kinase superfamily. STE Ser/Thr protein kinase family. STE20 subfamily.</text>
</comment>